<feature type="chain" id="PRO_0000142346" description="Aspartate carbamoyltransferase regulatory chain">
    <location>
        <begin position="1"/>
        <end position="152"/>
    </location>
</feature>
<feature type="binding site" evidence="1">
    <location>
        <position position="109"/>
    </location>
    <ligand>
        <name>Zn(2+)</name>
        <dbReference type="ChEBI" id="CHEBI:29105"/>
    </ligand>
</feature>
<feature type="binding site" evidence="1">
    <location>
        <position position="114"/>
    </location>
    <ligand>
        <name>Zn(2+)</name>
        <dbReference type="ChEBI" id="CHEBI:29105"/>
    </ligand>
</feature>
<feature type="binding site" evidence="1">
    <location>
        <position position="138"/>
    </location>
    <ligand>
        <name>Zn(2+)</name>
        <dbReference type="ChEBI" id="CHEBI:29105"/>
    </ligand>
</feature>
<feature type="binding site" evidence="1">
    <location>
        <position position="141"/>
    </location>
    <ligand>
        <name>Zn(2+)</name>
        <dbReference type="ChEBI" id="CHEBI:29105"/>
    </ligand>
</feature>
<comment type="function">
    <text evidence="1">Involved in allosteric regulation of aspartate carbamoyltransferase.</text>
</comment>
<comment type="cofactor">
    <cofactor evidence="1">
        <name>Zn(2+)</name>
        <dbReference type="ChEBI" id="CHEBI:29105"/>
    </cofactor>
    <text evidence="1">Binds 1 zinc ion per subunit.</text>
</comment>
<comment type="subunit">
    <text evidence="1">Contains catalytic and regulatory chains.</text>
</comment>
<comment type="similarity">
    <text evidence="1">Belongs to the PyrI family.</text>
</comment>
<accession>Q97B28</accession>
<organism>
    <name type="scientific">Thermoplasma volcanium (strain ATCC 51530 / DSM 4299 / JCM 9571 / NBRC 15438 / GSS1)</name>
    <dbReference type="NCBI Taxonomy" id="273116"/>
    <lineage>
        <taxon>Archaea</taxon>
        <taxon>Methanobacteriati</taxon>
        <taxon>Thermoplasmatota</taxon>
        <taxon>Thermoplasmata</taxon>
        <taxon>Thermoplasmatales</taxon>
        <taxon>Thermoplasmataceae</taxon>
        <taxon>Thermoplasma</taxon>
    </lineage>
</organism>
<proteinExistence type="inferred from homology"/>
<dbReference type="EMBL" id="BA000011">
    <property type="protein sequence ID" value="BAB59773.1"/>
    <property type="molecule type" value="Genomic_DNA"/>
</dbReference>
<dbReference type="RefSeq" id="WP_010916890.1">
    <property type="nucleotide sequence ID" value="NC_002689.2"/>
</dbReference>
<dbReference type="SMR" id="Q97B28"/>
<dbReference type="STRING" id="273116.gene:9381419"/>
<dbReference type="PaxDb" id="273116-14324847"/>
<dbReference type="GeneID" id="1441738"/>
<dbReference type="KEGG" id="tvo:TVG0624900"/>
<dbReference type="eggNOG" id="arCOG04229">
    <property type="taxonomic scope" value="Archaea"/>
</dbReference>
<dbReference type="HOGENOM" id="CLU_128576_0_0_2"/>
<dbReference type="OrthoDB" id="7000at2157"/>
<dbReference type="PhylomeDB" id="Q97B28"/>
<dbReference type="Proteomes" id="UP000001017">
    <property type="component" value="Chromosome"/>
</dbReference>
<dbReference type="GO" id="GO:0009347">
    <property type="term" value="C:aspartate carbamoyltransferase complex"/>
    <property type="evidence" value="ECO:0007669"/>
    <property type="project" value="InterPro"/>
</dbReference>
<dbReference type="GO" id="GO:0046872">
    <property type="term" value="F:metal ion binding"/>
    <property type="evidence" value="ECO:0007669"/>
    <property type="project" value="UniProtKB-KW"/>
</dbReference>
<dbReference type="GO" id="GO:0006207">
    <property type="term" value="P:'de novo' pyrimidine nucleobase biosynthetic process"/>
    <property type="evidence" value="ECO:0007669"/>
    <property type="project" value="InterPro"/>
</dbReference>
<dbReference type="GO" id="GO:0006221">
    <property type="term" value="P:pyrimidine nucleotide biosynthetic process"/>
    <property type="evidence" value="ECO:0007669"/>
    <property type="project" value="UniProtKB-UniRule"/>
</dbReference>
<dbReference type="Gene3D" id="2.30.30.20">
    <property type="entry name" value="Aspartate carbamoyltransferase regulatory subunit, C-terminal domain"/>
    <property type="match status" value="1"/>
</dbReference>
<dbReference type="Gene3D" id="3.30.70.140">
    <property type="entry name" value="Aspartate carbamoyltransferase regulatory subunit, N-terminal domain"/>
    <property type="match status" value="1"/>
</dbReference>
<dbReference type="HAMAP" id="MF_00002">
    <property type="entry name" value="Asp_carb_tr_reg"/>
    <property type="match status" value="1"/>
</dbReference>
<dbReference type="InterPro" id="IPR020545">
    <property type="entry name" value="Asp_carbamoyltransf_reg_N"/>
</dbReference>
<dbReference type="InterPro" id="IPR002801">
    <property type="entry name" value="Asp_carbamoylTrfase_reg"/>
</dbReference>
<dbReference type="InterPro" id="IPR020542">
    <property type="entry name" value="Asp_carbamoyltrfase_reg_C"/>
</dbReference>
<dbReference type="InterPro" id="IPR036792">
    <property type="entry name" value="Asp_carbatrfase_reg_C_sf"/>
</dbReference>
<dbReference type="InterPro" id="IPR036793">
    <property type="entry name" value="Asp_carbatrfase_reg_N_sf"/>
</dbReference>
<dbReference type="NCBIfam" id="TIGR00240">
    <property type="entry name" value="ATCase_reg"/>
    <property type="match status" value="1"/>
</dbReference>
<dbReference type="PANTHER" id="PTHR35805">
    <property type="entry name" value="ASPARTATE CARBAMOYLTRANSFERASE REGULATORY CHAIN"/>
    <property type="match status" value="1"/>
</dbReference>
<dbReference type="PANTHER" id="PTHR35805:SF1">
    <property type="entry name" value="ASPARTATE CARBAMOYLTRANSFERASE REGULATORY CHAIN"/>
    <property type="match status" value="1"/>
</dbReference>
<dbReference type="Pfam" id="PF01948">
    <property type="entry name" value="PyrI"/>
    <property type="match status" value="1"/>
</dbReference>
<dbReference type="Pfam" id="PF02748">
    <property type="entry name" value="PyrI_C"/>
    <property type="match status" value="1"/>
</dbReference>
<dbReference type="SUPFAM" id="SSF57825">
    <property type="entry name" value="Aspartate carbamoyltransferase, Regulatory-chain, C-terminal domain"/>
    <property type="match status" value="1"/>
</dbReference>
<dbReference type="SUPFAM" id="SSF54893">
    <property type="entry name" value="Aspartate carbamoyltransferase, Regulatory-chain, N-terminal domain"/>
    <property type="match status" value="1"/>
</dbReference>
<protein>
    <recommendedName>
        <fullName evidence="1">Aspartate carbamoyltransferase regulatory chain</fullName>
    </recommendedName>
</protein>
<keyword id="KW-0479">Metal-binding</keyword>
<keyword id="KW-0665">Pyrimidine biosynthesis</keyword>
<keyword id="KW-0862">Zinc</keyword>
<reference key="1">
    <citation type="journal article" date="2000" name="Proc. Natl. Acad. Sci. U.S.A.">
        <title>Archaeal adaptation to higher temperatures revealed by genomic sequence of Thermoplasma volcanium.</title>
        <authorList>
            <person name="Kawashima T."/>
            <person name="Amano N."/>
            <person name="Koike H."/>
            <person name="Makino S."/>
            <person name="Higuchi S."/>
            <person name="Kawashima-Ohya Y."/>
            <person name="Watanabe K."/>
            <person name="Yamazaki M."/>
            <person name="Kanehori K."/>
            <person name="Kawamoto T."/>
            <person name="Nunoshiba T."/>
            <person name="Yamamoto Y."/>
            <person name="Aramaki H."/>
            <person name="Makino K."/>
            <person name="Suzuki M."/>
        </authorList>
    </citation>
    <scope>NUCLEOTIDE SEQUENCE [LARGE SCALE GENOMIC DNA]</scope>
    <source>
        <strain>ATCC 51530 / DSM 4299 / JCM 9571 / NBRC 15438 / GSS1</strain>
    </source>
</reference>
<gene>
    <name evidence="1" type="primary">pyrI</name>
    <name type="ordered locus">TV0631</name>
    <name type="ORF">TVG0624900</name>
</gene>
<sequence length="152" mass="17388">MEEKTLKISKIKDGTVIDHIPSGKALRVLSILGIRDDVDYTVSVGMHVPSSKMEYKDVIKIENRSLDKNELDMISLTAPNATISIIKNYEISEKFKVELPPKLIGIIKCKNQNCITNTREPVKPEFEIVSRHPLVLRCVYCQRTMNERDVFE</sequence>
<name>PYRI_THEVO</name>
<evidence type="ECO:0000255" key="1">
    <source>
        <dbReference type="HAMAP-Rule" id="MF_00002"/>
    </source>
</evidence>